<name>GPH_HAEIN</name>
<dbReference type="EC" id="3.1.3.18" evidence="1"/>
<dbReference type="EMBL" id="L42023">
    <property type="protein sequence ID" value="AAC22223.1"/>
    <property type="molecule type" value="Genomic_DNA"/>
</dbReference>
<dbReference type="PIR" id="G64154">
    <property type="entry name" value="G64154"/>
</dbReference>
<dbReference type="RefSeq" id="NP_438722.1">
    <property type="nucleotide sequence ID" value="NC_000907.1"/>
</dbReference>
<dbReference type="SMR" id="P44755"/>
<dbReference type="STRING" id="71421.HI_0565"/>
<dbReference type="EnsemblBacteria" id="AAC22223">
    <property type="protein sequence ID" value="AAC22223"/>
    <property type="gene ID" value="HI_0565"/>
</dbReference>
<dbReference type="KEGG" id="hin:HI_0565"/>
<dbReference type="PATRIC" id="fig|71421.8.peg.585"/>
<dbReference type="eggNOG" id="COG0546">
    <property type="taxonomic scope" value="Bacteria"/>
</dbReference>
<dbReference type="HOGENOM" id="CLU_045011_19_1_6"/>
<dbReference type="OrthoDB" id="9776368at2"/>
<dbReference type="PhylomeDB" id="P44755"/>
<dbReference type="BioCyc" id="HINF71421:G1GJ1-577-MONOMER"/>
<dbReference type="UniPathway" id="UPA00865">
    <property type="reaction ID" value="UER00834"/>
</dbReference>
<dbReference type="Proteomes" id="UP000000579">
    <property type="component" value="Chromosome"/>
</dbReference>
<dbReference type="GO" id="GO:0005829">
    <property type="term" value="C:cytosol"/>
    <property type="evidence" value="ECO:0000318"/>
    <property type="project" value="GO_Central"/>
</dbReference>
<dbReference type="GO" id="GO:0046872">
    <property type="term" value="F:metal ion binding"/>
    <property type="evidence" value="ECO:0007669"/>
    <property type="project" value="UniProtKB-KW"/>
</dbReference>
<dbReference type="GO" id="GO:0008967">
    <property type="term" value="F:phosphoglycolate phosphatase activity"/>
    <property type="evidence" value="ECO:0000318"/>
    <property type="project" value="GO_Central"/>
</dbReference>
<dbReference type="GO" id="GO:0005975">
    <property type="term" value="P:carbohydrate metabolic process"/>
    <property type="evidence" value="ECO:0007669"/>
    <property type="project" value="InterPro"/>
</dbReference>
<dbReference type="GO" id="GO:0006281">
    <property type="term" value="P:DNA repair"/>
    <property type="evidence" value="ECO:0000318"/>
    <property type="project" value="GO_Central"/>
</dbReference>
<dbReference type="GO" id="GO:0046295">
    <property type="term" value="P:glycolate biosynthetic process"/>
    <property type="evidence" value="ECO:0007669"/>
    <property type="project" value="UniProtKB-UniRule"/>
</dbReference>
<dbReference type="CDD" id="cd16417">
    <property type="entry name" value="HAD_PGPase"/>
    <property type="match status" value="1"/>
</dbReference>
<dbReference type="FunFam" id="3.40.50.1000:FF:000022">
    <property type="entry name" value="Phosphoglycolate phosphatase"/>
    <property type="match status" value="1"/>
</dbReference>
<dbReference type="Gene3D" id="3.40.50.1000">
    <property type="entry name" value="HAD superfamily/HAD-like"/>
    <property type="match status" value="1"/>
</dbReference>
<dbReference type="Gene3D" id="1.10.150.240">
    <property type="entry name" value="Putative phosphatase, domain 2"/>
    <property type="match status" value="1"/>
</dbReference>
<dbReference type="HAMAP" id="MF_00495">
    <property type="entry name" value="GPH_hydrolase_bact"/>
    <property type="match status" value="1"/>
</dbReference>
<dbReference type="InterPro" id="IPR050155">
    <property type="entry name" value="HAD-like_hydrolase_sf"/>
</dbReference>
<dbReference type="InterPro" id="IPR036412">
    <property type="entry name" value="HAD-like_sf"/>
</dbReference>
<dbReference type="InterPro" id="IPR006439">
    <property type="entry name" value="HAD-SF_hydro_IA"/>
</dbReference>
<dbReference type="InterPro" id="IPR041492">
    <property type="entry name" value="HAD_2"/>
</dbReference>
<dbReference type="InterPro" id="IPR023214">
    <property type="entry name" value="HAD_sf"/>
</dbReference>
<dbReference type="InterPro" id="IPR023198">
    <property type="entry name" value="PGP-like_dom2"/>
</dbReference>
<dbReference type="InterPro" id="IPR037512">
    <property type="entry name" value="PGPase_prok"/>
</dbReference>
<dbReference type="NCBIfam" id="TIGR01549">
    <property type="entry name" value="HAD-SF-IA-v1"/>
    <property type="match status" value="1"/>
</dbReference>
<dbReference type="NCBIfam" id="TIGR01509">
    <property type="entry name" value="HAD-SF-IA-v3"/>
    <property type="match status" value="1"/>
</dbReference>
<dbReference type="NCBIfam" id="TIGR01449">
    <property type="entry name" value="PGP_bact"/>
    <property type="match status" value="1"/>
</dbReference>
<dbReference type="NCBIfam" id="NF009695">
    <property type="entry name" value="PRK13222.1-2"/>
    <property type="match status" value="1"/>
</dbReference>
<dbReference type="PANTHER" id="PTHR43434">
    <property type="entry name" value="PHOSPHOGLYCOLATE PHOSPHATASE"/>
    <property type="match status" value="1"/>
</dbReference>
<dbReference type="PANTHER" id="PTHR43434:SF1">
    <property type="entry name" value="PHOSPHOGLYCOLATE PHOSPHATASE"/>
    <property type="match status" value="1"/>
</dbReference>
<dbReference type="Pfam" id="PF13419">
    <property type="entry name" value="HAD_2"/>
    <property type="match status" value="1"/>
</dbReference>
<dbReference type="PRINTS" id="PR00413">
    <property type="entry name" value="HADHALOGNASE"/>
</dbReference>
<dbReference type="SFLD" id="SFLDG01135">
    <property type="entry name" value="C1.5.6:_HAD__Beta-PGM__Phospha"/>
    <property type="match status" value="1"/>
</dbReference>
<dbReference type="SFLD" id="SFLDS00003">
    <property type="entry name" value="Haloacid_Dehalogenase"/>
    <property type="match status" value="1"/>
</dbReference>
<dbReference type="SUPFAM" id="SSF56784">
    <property type="entry name" value="HAD-like"/>
    <property type="match status" value="1"/>
</dbReference>
<comment type="function">
    <text evidence="1">Specifically catalyzes the dephosphorylation of 2-phosphoglycolate. Is involved in the dissimilation of the intracellular 2-phosphoglycolate formed during the DNA repair of 3'-phosphoglycolate ends, a major class of DNA lesions induced by oxidative stress.</text>
</comment>
<comment type="catalytic activity">
    <reaction evidence="1">
        <text>2-phosphoglycolate + H2O = glycolate + phosphate</text>
        <dbReference type="Rhea" id="RHEA:14369"/>
        <dbReference type="ChEBI" id="CHEBI:15377"/>
        <dbReference type="ChEBI" id="CHEBI:29805"/>
        <dbReference type="ChEBI" id="CHEBI:43474"/>
        <dbReference type="ChEBI" id="CHEBI:58033"/>
        <dbReference type="EC" id="3.1.3.18"/>
    </reaction>
</comment>
<comment type="cofactor">
    <cofactor evidence="1">
        <name>Mg(2+)</name>
        <dbReference type="ChEBI" id="CHEBI:18420"/>
    </cofactor>
</comment>
<comment type="pathway">
    <text evidence="1">Organic acid metabolism; glycolate biosynthesis; glycolate from 2-phosphoglycolate: step 1/1.</text>
</comment>
<comment type="similarity">
    <text evidence="1">Belongs to the HAD-like hydrolase superfamily. CbbY/CbbZ/Gph/YieH family.</text>
</comment>
<organism>
    <name type="scientific">Haemophilus influenzae (strain ATCC 51907 / DSM 11121 / KW20 / Rd)</name>
    <dbReference type="NCBI Taxonomy" id="71421"/>
    <lineage>
        <taxon>Bacteria</taxon>
        <taxon>Pseudomonadati</taxon>
        <taxon>Pseudomonadota</taxon>
        <taxon>Gammaproteobacteria</taxon>
        <taxon>Pasteurellales</taxon>
        <taxon>Pasteurellaceae</taxon>
        <taxon>Haemophilus</taxon>
    </lineage>
</organism>
<sequence length="224" mass="24774">MNTQFKLIGFDLDGTLVNSLPDLALSVNSALAEFNLPQAPEELVLTWIGNGAPVLIARALDWAKKQTGKVLTETEVKQVTERFNFYYGENLCNVSRLYPNVKETLEILKEKGYVLAVVTNKPTRHVQPVLAAFGIDHLFSEMLGGQSLPAIKPHPAPLYYLCGKFGFEPRQVLFVGDSKNDIIAGHAAGCAVVGLTYGYNYNIPIRESNPDWVFDDFAQLLSIL</sequence>
<proteinExistence type="inferred from homology"/>
<reference key="1">
    <citation type="journal article" date="1995" name="Science">
        <title>Whole-genome random sequencing and assembly of Haemophilus influenzae Rd.</title>
        <authorList>
            <person name="Fleischmann R.D."/>
            <person name="Adams M.D."/>
            <person name="White O."/>
            <person name="Clayton R.A."/>
            <person name="Kirkness E.F."/>
            <person name="Kerlavage A.R."/>
            <person name="Bult C.J."/>
            <person name="Tomb J.-F."/>
            <person name="Dougherty B.A."/>
            <person name="Merrick J.M."/>
            <person name="McKenney K."/>
            <person name="Sutton G.G."/>
            <person name="FitzHugh W."/>
            <person name="Fields C.A."/>
            <person name="Gocayne J.D."/>
            <person name="Scott J.D."/>
            <person name="Shirley R."/>
            <person name="Liu L.-I."/>
            <person name="Glodek A."/>
            <person name="Kelley J.M."/>
            <person name="Weidman J.F."/>
            <person name="Phillips C.A."/>
            <person name="Spriggs T."/>
            <person name="Hedblom E."/>
            <person name="Cotton M.D."/>
            <person name="Utterback T.R."/>
            <person name="Hanna M.C."/>
            <person name="Nguyen D.T."/>
            <person name="Saudek D.M."/>
            <person name="Brandon R.C."/>
            <person name="Fine L.D."/>
            <person name="Fritchman J.L."/>
            <person name="Fuhrmann J.L."/>
            <person name="Geoghagen N.S.M."/>
            <person name="Gnehm C.L."/>
            <person name="McDonald L.A."/>
            <person name="Small K.V."/>
            <person name="Fraser C.M."/>
            <person name="Smith H.O."/>
            <person name="Venter J.C."/>
        </authorList>
    </citation>
    <scope>NUCLEOTIDE SEQUENCE [LARGE SCALE GENOMIC DNA]</scope>
    <source>
        <strain>ATCC 51907 / DSM 11121 / KW20 / Rd</strain>
    </source>
</reference>
<gene>
    <name evidence="1" type="primary">gph</name>
    <name type="ordered locus">HI_0565</name>
</gene>
<protein>
    <recommendedName>
        <fullName evidence="1">Phosphoglycolate phosphatase</fullName>
        <shortName evidence="1">PGP</shortName>
        <shortName evidence="1">PGPase</shortName>
        <ecNumber evidence="1">3.1.3.18</ecNumber>
    </recommendedName>
</protein>
<keyword id="KW-0119">Carbohydrate metabolism</keyword>
<keyword id="KW-0378">Hydrolase</keyword>
<keyword id="KW-0460">Magnesium</keyword>
<keyword id="KW-0479">Metal-binding</keyword>
<keyword id="KW-1185">Reference proteome</keyword>
<evidence type="ECO:0000255" key="1">
    <source>
        <dbReference type="HAMAP-Rule" id="MF_00495"/>
    </source>
</evidence>
<feature type="chain" id="PRO_0000108029" description="Phosphoglycolate phosphatase">
    <location>
        <begin position="1"/>
        <end position="224"/>
    </location>
</feature>
<feature type="active site" description="Nucleophile" evidence="1">
    <location>
        <position position="11"/>
    </location>
</feature>
<feature type="binding site" evidence="1">
    <location>
        <position position="11"/>
    </location>
    <ligand>
        <name>Mg(2+)</name>
        <dbReference type="ChEBI" id="CHEBI:18420"/>
    </ligand>
</feature>
<feature type="binding site" evidence="1">
    <location>
        <position position="13"/>
    </location>
    <ligand>
        <name>Mg(2+)</name>
        <dbReference type="ChEBI" id="CHEBI:18420"/>
    </ligand>
</feature>
<feature type="binding site" evidence="1">
    <location>
        <position position="177"/>
    </location>
    <ligand>
        <name>Mg(2+)</name>
        <dbReference type="ChEBI" id="CHEBI:18420"/>
    </ligand>
</feature>
<accession>P44755</accession>